<sequence length="175" mass="19228">MLDLGLSKMALIGVVALVVLGPERLPRVARTAGALFGRAQRYINDVKAEVSREIELDALRTMKTDFEQAARNVENTIHDNLREHERDLNAAWNSAVSPGGSAAADAPDGPSAASGEPSWRSIAAAPAKRRNWRVKKAVTPVWYKRATMRRTQVQSGAARVARHRPASLRRPARFL</sequence>
<feature type="chain" id="PRO_0000301155" description="Sec-independent protein translocase protein TatB">
    <location>
        <begin position="1"/>
        <end position="175"/>
    </location>
</feature>
<feature type="transmembrane region" description="Helical" evidence="1">
    <location>
        <begin position="1"/>
        <end position="21"/>
    </location>
</feature>
<feature type="region of interest" description="Disordered" evidence="2">
    <location>
        <begin position="96"/>
        <end position="119"/>
    </location>
</feature>
<feature type="region of interest" description="Disordered" evidence="2">
    <location>
        <begin position="152"/>
        <end position="175"/>
    </location>
</feature>
<feature type="compositionally biased region" description="Low complexity" evidence="2">
    <location>
        <begin position="96"/>
        <end position="115"/>
    </location>
</feature>
<feature type="compositionally biased region" description="Basic residues" evidence="2">
    <location>
        <begin position="160"/>
        <end position="175"/>
    </location>
</feature>
<dbReference type="EMBL" id="CP000124">
    <property type="protein sequence ID" value="ABA48138.1"/>
    <property type="molecule type" value="Genomic_DNA"/>
</dbReference>
<dbReference type="RefSeq" id="WP_004527884.1">
    <property type="nucleotide sequence ID" value="NC_007434.1"/>
</dbReference>
<dbReference type="SMR" id="Q3JN08"/>
<dbReference type="EnsemblBacteria" id="ABA48138">
    <property type="protein sequence ID" value="ABA48138"/>
    <property type="gene ID" value="BURPS1710b_3681"/>
</dbReference>
<dbReference type="KEGG" id="bpm:BURPS1710b_3681"/>
<dbReference type="HOGENOM" id="CLU_086034_1_1_4"/>
<dbReference type="Proteomes" id="UP000002700">
    <property type="component" value="Chromosome I"/>
</dbReference>
<dbReference type="GO" id="GO:0033281">
    <property type="term" value="C:TAT protein transport complex"/>
    <property type="evidence" value="ECO:0007669"/>
    <property type="project" value="UniProtKB-UniRule"/>
</dbReference>
<dbReference type="GO" id="GO:0008320">
    <property type="term" value="F:protein transmembrane transporter activity"/>
    <property type="evidence" value="ECO:0007669"/>
    <property type="project" value="UniProtKB-UniRule"/>
</dbReference>
<dbReference type="GO" id="GO:0043953">
    <property type="term" value="P:protein transport by the Tat complex"/>
    <property type="evidence" value="ECO:0007669"/>
    <property type="project" value="UniProtKB-UniRule"/>
</dbReference>
<dbReference type="Gene3D" id="1.20.5.3310">
    <property type="match status" value="1"/>
</dbReference>
<dbReference type="HAMAP" id="MF_00237">
    <property type="entry name" value="TatB"/>
    <property type="match status" value="1"/>
</dbReference>
<dbReference type="InterPro" id="IPR003369">
    <property type="entry name" value="TatA/B/E"/>
</dbReference>
<dbReference type="InterPro" id="IPR018448">
    <property type="entry name" value="TatB"/>
</dbReference>
<dbReference type="NCBIfam" id="TIGR01410">
    <property type="entry name" value="tatB"/>
    <property type="match status" value="1"/>
</dbReference>
<dbReference type="PANTHER" id="PTHR33162">
    <property type="entry name" value="SEC-INDEPENDENT PROTEIN TRANSLOCASE PROTEIN TATA, CHLOROPLASTIC"/>
    <property type="match status" value="1"/>
</dbReference>
<dbReference type="PANTHER" id="PTHR33162:SF1">
    <property type="entry name" value="SEC-INDEPENDENT PROTEIN TRANSLOCASE PROTEIN TATA, CHLOROPLASTIC"/>
    <property type="match status" value="1"/>
</dbReference>
<dbReference type="Pfam" id="PF02416">
    <property type="entry name" value="TatA_B_E"/>
    <property type="match status" value="1"/>
</dbReference>
<dbReference type="PRINTS" id="PR01506">
    <property type="entry name" value="TATBPROTEIN"/>
</dbReference>
<proteinExistence type="inferred from homology"/>
<keyword id="KW-0997">Cell inner membrane</keyword>
<keyword id="KW-1003">Cell membrane</keyword>
<keyword id="KW-0472">Membrane</keyword>
<keyword id="KW-0653">Protein transport</keyword>
<keyword id="KW-0811">Translocation</keyword>
<keyword id="KW-0812">Transmembrane</keyword>
<keyword id="KW-1133">Transmembrane helix</keyword>
<keyword id="KW-0813">Transport</keyword>
<protein>
    <recommendedName>
        <fullName evidence="1">Sec-independent protein translocase protein TatB</fullName>
    </recommendedName>
</protein>
<evidence type="ECO:0000255" key="1">
    <source>
        <dbReference type="HAMAP-Rule" id="MF_00237"/>
    </source>
</evidence>
<evidence type="ECO:0000256" key="2">
    <source>
        <dbReference type="SAM" id="MobiDB-lite"/>
    </source>
</evidence>
<gene>
    <name evidence="1" type="primary">tatB</name>
    <name type="ordered locus">BURPS1710b_3681</name>
</gene>
<comment type="function">
    <text evidence="1">Part of the twin-arginine translocation (Tat) system that transports large folded proteins containing a characteristic twin-arginine motif in their signal peptide across membranes. Together with TatC, TatB is part of a receptor directly interacting with Tat signal peptides. TatB may form an oligomeric binding site that transiently accommodates folded Tat precursor proteins before their translocation.</text>
</comment>
<comment type="subunit">
    <text evidence="1">The Tat system comprises two distinct complexes: a TatABC complex, containing multiple copies of TatA, TatB and TatC subunits, and a separate TatA complex, containing only TatA subunits. Substrates initially bind to the TatABC complex, which probably triggers association of the separate TatA complex to form the active translocon.</text>
</comment>
<comment type="subcellular location">
    <subcellularLocation>
        <location evidence="1">Cell inner membrane</location>
        <topology evidence="1">Single-pass membrane protein</topology>
    </subcellularLocation>
</comment>
<comment type="similarity">
    <text evidence="1">Belongs to the TatB family.</text>
</comment>
<accession>Q3JN08</accession>
<name>TATB_BURP1</name>
<reference key="1">
    <citation type="journal article" date="2010" name="Genome Biol. Evol.">
        <title>Continuing evolution of Burkholderia mallei through genome reduction and large-scale rearrangements.</title>
        <authorList>
            <person name="Losada L."/>
            <person name="Ronning C.M."/>
            <person name="DeShazer D."/>
            <person name="Woods D."/>
            <person name="Fedorova N."/>
            <person name="Kim H.S."/>
            <person name="Shabalina S.A."/>
            <person name="Pearson T.R."/>
            <person name="Brinkac L."/>
            <person name="Tan P."/>
            <person name="Nandi T."/>
            <person name="Crabtree J."/>
            <person name="Badger J."/>
            <person name="Beckstrom-Sternberg S."/>
            <person name="Saqib M."/>
            <person name="Schutzer S.E."/>
            <person name="Keim P."/>
            <person name="Nierman W.C."/>
        </authorList>
    </citation>
    <scope>NUCLEOTIDE SEQUENCE [LARGE SCALE GENOMIC DNA]</scope>
    <source>
        <strain>1710b</strain>
    </source>
</reference>
<organism>
    <name type="scientific">Burkholderia pseudomallei (strain 1710b)</name>
    <dbReference type="NCBI Taxonomy" id="320372"/>
    <lineage>
        <taxon>Bacteria</taxon>
        <taxon>Pseudomonadati</taxon>
        <taxon>Pseudomonadota</taxon>
        <taxon>Betaproteobacteria</taxon>
        <taxon>Burkholderiales</taxon>
        <taxon>Burkholderiaceae</taxon>
        <taxon>Burkholderia</taxon>
        <taxon>pseudomallei group</taxon>
    </lineage>
</organism>